<keyword id="KW-0150">Chloroplast</keyword>
<keyword id="KW-0472">Membrane</keyword>
<keyword id="KW-0520">NAD</keyword>
<keyword id="KW-0521">NADP</keyword>
<keyword id="KW-0934">Plastid</keyword>
<keyword id="KW-0618">Plastoquinone</keyword>
<keyword id="KW-0874">Quinone</keyword>
<keyword id="KW-0793">Thylakoid</keyword>
<keyword id="KW-1278">Translocase</keyword>
<keyword id="KW-0813">Transport</keyword>
<geneLocation type="chloroplast"/>
<organism>
    <name type="scientific">Morus indica</name>
    <name type="common">Mulberry</name>
    <dbReference type="NCBI Taxonomy" id="248361"/>
    <lineage>
        <taxon>Eukaryota</taxon>
        <taxon>Viridiplantae</taxon>
        <taxon>Streptophyta</taxon>
        <taxon>Embryophyta</taxon>
        <taxon>Tracheophyta</taxon>
        <taxon>Spermatophyta</taxon>
        <taxon>Magnoliopsida</taxon>
        <taxon>eudicotyledons</taxon>
        <taxon>Gunneridae</taxon>
        <taxon>Pentapetalae</taxon>
        <taxon>rosids</taxon>
        <taxon>fabids</taxon>
        <taxon>Rosales</taxon>
        <taxon>Moraceae</taxon>
        <taxon>Moreae</taxon>
        <taxon>Morus</taxon>
    </lineage>
</organism>
<comment type="function">
    <text evidence="1">NDH shuttles electrons from NAD(P)H:plastoquinone, via FMN and iron-sulfur (Fe-S) centers, to quinones in the photosynthetic chain and possibly in a chloroplast respiratory chain. The immediate electron acceptor for the enzyme in this species is believed to be plastoquinone. Couples the redox reaction to proton translocation, and thus conserves the redox energy in a proton gradient.</text>
</comment>
<comment type="catalytic activity">
    <reaction evidence="1">
        <text>a plastoquinone + NADH + (n+1) H(+)(in) = a plastoquinol + NAD(+) + n H(+)(out)</text>
        <dbReference type="Rhea" id="RHEA:42608"/>
        <dbReference type="Rhea" id="RHEA-COMP:9561"/>
        <dbReference type="Rhea" id="RHEA-COMP:9562"/>
        <dbReference type="ChEBI" id="CHEBI:15378"/>
        <dbReference type="ChEBI" id="CHEBI:17757"/>
        <dbReference type="ChEBI" id="CHEBI:57540"/>
        <dbReference type="ChEBI" id="CHEBI:57945"/>
        <dbReference type="ChEBI" id="CHEBI:62192"/>
    </reaction>
</comment>
<comment type="catalytic activity">
    <reaction evidence="1">
        <text>a plastoquinone + NADPH + (n+1) H(+)(in) = a plastoquinol + NADP(+) + n H(+)(out)</text>
        <dbReference type="Rhea" id="RHEA:42612"/>
        <dbReference type="Rhea" id="RHEA-COMP:9561"/>
        <dbReference type="Rhea" id="RHEA-COMP:9562"/>
        <dbReference type="ChEBI" id="CHEBI:15378"/>
        <dbReference type="ChEBI" id="CHEBI:17757"/>
        <dbReference type="ChEBI" id="CHEBI:57783"/>
        <dbReference type="ChEBI" id="CHEBI:58349"/>
        <dbReference type="ChEBI" id="CHEBI:62192"/>
    </reaction>
</comment>
<comment type="subunit">
    <text evidence="1">NDH is composed of at least 16 different subunits, 5 of which are encoded in the nucleus.</text>
</comment>
<comment type="subcellular location">
    <subcellularLocation>
        <location evidence="1">Plastid</location>
        <location evidence="1">Chloroplast thylakoid membrane</location>
        <topology evidence="1">Peripheral membrane protein</topology>
        <orientation evidence="1">Stromal side</orientation>
    </subcellularLocation>
</comment>
<comment type="similarity">
    <text evidence="1">Belongs to the complex I 30 kDa subunit family.</text>
</comment>
<sequence>MQGRLSVWLIKHGLVHRSLGFDYQGIETLQIKPEDWHSIAVILYVYGYNYLRSQCAYDVAPGGLLASVYHLTRIEYGIDQPEEVCIKVFAPRRNPRIPSVFWIWKSADFQERESYDMLGISYNNHPRLKRILMPESWIGWPLRKDYIAPNFYEIQDAH</sequence>
<reference key="1">
    <citation type="submission" date="2005-09" db="EMBL/GenBank/DDBJ databases">
        <title>The chloroplast genome of mulberry: structural features and comparative analysis.</title>
        <authorList>
            <person name="Ravi V."/>
            <person name="Khurana J.P."/>
            <person name="Tyagi A.K."/>
            <person name="Khurana P."/>
        </authorList>
    </citation>
    <scope>NUCLEOTIDE SEQUENCE [LARGE SCALE GENOMIC DNA]</scope>
    <source>
        <strain>cv. K2</strain>
    </source>
</reference>
<proteinExistence type="inferred from homology"/>
<evidence type="ECO:0000255" key="1">
    <source>
        <dbReference type="HAMAP-Rule" id="MF_01357"/>
    </source>
</evidence>
<gene>
    <name evidence="1" type="primary">ndhJ</name>
    <name type="ordered locus">MoinCp024</name>
</gene>
<name>NDHJ_MORIN</name>
<feature type="chain" id="PRO_0000358282" description="NAD(P)H-quinone oxidoreductase subunit J, chloroplastic">
    <location>
        <begin position="1"/>
        <end position="158"/>
    </location>
</feature>
<protein>
    <recommendedName>
        <fullName evidence="1">NAD(P)H-quinone oxidoreductase subunit J, chloroplastic</fullName>
        <ecNumber evidence="1">7.1.1.-</ecNumber>
    </recommendedName>
    <alternativeName>
        <fullName>NAD(P)H dehydrogenase subunit J</fullName>
    </alternativeName>
    <alternativeName>
        <fullName evidence="1">NADH-plastoquinone oxidoreductase subunit J</fullName>
    </alternativeName>
</protein>
<dbReference type="EC" id="7.1.1.-" evidence="1"/>
<dbReference type="EMBL" id="DQ226511">
    <property type="protein sequence ID" value="ABB20961.1"/>
    <property type="molecule type" value="Genomic_DNA"/>
</dbReference>
<dbReference type="RefSeq" id="YP_762264.1">
    <property type="nucleotide sequence ID" value="NC_008359.1"/>
</dbReference>
<dbReference type="SMR" id="Q09X14"/>
<dbReference type="GeneID" id="4290576"/>
<dbReference type="GO" id="GO:0009535">
    <property type="term" value="C:chloroplast thylakoid membrane"/>
    <property type="evidence" value="ECO:0007669"/>
    <property type="project" value="UniProtKB-SubCell"/>
</dbReference>
<dbReference type="GO" id="GO:0008137">
    <property type="term" value="F:NADH dehydrogenase (ubiquinone) activity"/>
    <property type="evidence" value="ECO:0007669"/>
    <property type="project" value="InterPro"/>
</dbReference>
<dbReference type="GO" id="GO:0048038">
    <property type="term" value="F:quinone binding"/>
    <property type="evidence" value="ECO:0007669"/>
    <property type="project" value="UniProtKB-KW"/>
</dbReference>
<dbReference type="GO" id="GO:0019684">
    <property type="term" value="P:photosynthesis, light reaction"/>
    <property type="evidence" value="ECO:0007669"/>
    <property type="project" value="UniProtKB-UniRule"/>
</dbReference>
<dbReference type="FunFam" id="3.30.460.80:FF:000004">
    <property type="entry name" value="NAD(P)H-quinone oxidoreductase subunit J, chloroplastic"/>
    <property type="match status" value="1"/>
</dbReference>
<dbReference type="Gene3D" id="3.30.460.80">
    <property type="entry name" value="NADH:ubiquinone oxidoreductase, 30kDa subunit"/>
    <property type="match status" value="1"/>
</dbReference>
<dbReference type="HAMAP" id="MF_01357">
    <property type="entry name" value="NDH1_NuoC"/>
    <property type="match status" value="1"/>
</dbReference>
<dbReference type="InterPro" id="IPR010218">
    <property type="entry name" value="NADH_DH_suC"/>
</dbReference>
<dbReference type="InterPro" id="IPR037232">
    <property type="entry name" value="NADH_quin_OxRdtase_su_C/D-like"/>
</dbReference>
<dbReference type="InterPro" id="IPR001268">
    <property type="entry name" value="NADH_UbQ_OxRdtase_30kDa_su"/>
</dbReference>
<dbReference type="InterPro" id="IPR020396">
    <property type="entry name" value="NADH_UbQ_OxRdtase_CS"/>
</dbReference>
<dbReference type="NCBIfam" id="NF009141">
    <property type="entry name" value="PRK12494.1"/>
    <property type="match status" value="1"/>
</dbReference>
<dbReference type="PANTHER" id="PTHR10884:SF14">
    <property type="entry name" value="NADH DEHYDROGENASE [UBIQUINONE] IRON-SULFUR PROTEIN 3, MITOCHONDRIAL"/>
    <property type="match status" value="1"/>
</dbReference>
<dbReference type="PANTHER" id="PTHR10884">
    <property type="entry name" value="NADH DEHYDROGENASE UBIQUINONE IRON-SULFUR PROTEIN 3"/>
    <property type="match status" value="1"/>
</dbReference>
<dbReference type="Pfam" id="PF00329">
    <property type="entry name" value="Complex1_30kDa"/>
    <property type="match status" value="1"/>
</dbReference>
<dbReference type="SUPFAM" id="SSF143243">
    <property type="entry name" value="Nqo5-like"/>
    <property type="match status" value="1"/>
</dbReference>
<dbReference type="PROSITE" id="PS00542">
    <property type="entry name" value="COMPLEX1_30K"/>
    <property type="match status" value="1"/>
</dbReference>
<accession>Q09X14</accession>